<reference key="1">
    <citation type="journal article" date="1995" name="Nucleic Acids Res.">
        <title>The Sry-related HMG box-containing gene Sox6 is expressed in the adult testis and developing nervous system of the mouse.</title>
        <authorList>
            <person name="Connor F."/>
            <person name="Wright E."/>
            <person name="Denny P."/>
            <person name="Koopman P."/>
            <person name="Ashworth A."/>
        </authorList>
    </citation>
    <scope>NUCLEOTIDE SEQUENCE [MRNA] (ISOFORM 1)</scope>
    <scope>FUNCTION</scope>
    <source>
        <tissue>Testis</tissue>
    </source>
</reference>
<reference key="2">
    <citation type="journal article" date="1995" name="Mol. Cell. Biol.">
        <title>A gene that is related to SRY and is expressed in the testes encodes a leucine zipper-containing protein.</title>
        <authorList>
            <person name="Takamatsu N."/>
            <person name="Kanda H."/>
            <person name="Tsuchiya I."/>
            <person name="Yamada S."/>
            <person name="Ito M."/>
            <person name="Kabeno S."/>
            <person name="Shiba T."/>
            <person name="Yamashita S."/>
        </authorList>
    </citation>
    <scope>NUCLEOTIDE SEQUENCE [MRNA] (ISOFORM 2)</scope>
    <source>
        <strain>C57BL/6J</strain>
        <tissue>Testis</tissue>
    </source>
</reference>
<reference key="3">
    <citation type="journal article" date="1998" name="EMBO J.">
        <title>A new long form of Sox5 (L-Sox5), Sox6 and Sox9 are coexpressed in chondrogenesis and cooperatively activate the type II collagen gene.</title>
        <authorList>
            <person name="Lefebvre V."/>
            <person name="Li P."/>
            <person name="de Crombrugghe B."/>
        </authorList>
    </citation>
    <scope>NUCLEOTIDE SEQUENCE [MRNA] OF 519-827</scope>
    <scope>FUNCTION</scope>
</reference>
<reference key="4">
    <citation type="journal article" date="1992" name="Nucleic Acids Res.">
        <title>A conserved family of genes related to the testis determining gene, SRY.</title>
        <authorList>
            <person name="Denny P."/>
            <person name="Swift S."/>
            <person name="Brand N."/>
            <person name="Dabhade N."/>
            <person name="Barton P."/>
            <person name="Ashworth A."/>
        </authorList>
    </citation>
    <scope>NUCLEOTIDE SEQUENCE [MRNA] OF 631-684</scope>
    <source>
        <strain>Parkes</strain>
        <tissue>Brain</tissue>
        <tissue>Testis</tissue>
    </source>
</reference>
<reference key="5">
    <citation type="submission" date="2009-01" db="UniProtKB">
        <authorList>
            <person name="Lubec G."/>
            <person name="Sunyer B."/>
            <person name="Chen W.-Q."/>
        </authorList>
    </citation>
    <scope>PROTEIN SEQUENCE OF 660-666</scope>
    <scope>IDENTIFICATION BY MASS SPECTROMETRY</scope>
    <source>
        <strain>OF1</strain>
        <tissue>Hippocampus</tissue>
    </source>
</reference>
<reference key="6">
    <citation type="journal article" date="2000" name="FEBS Lett.">
        <title>Characterization of Solt, a novel SoxLZ/Sox6 binding protein expressed in adult mouse testis.</title>
        <authorList>
            <person name="Yamashita A."/>
            <person name="Ito M."/>
            <person name="Takamatsu N."/>
            <person name="Shiba T."/>
        </authorList>
    </citation>
    <scope>POSSIBLE INTERACTION WITH CENPK</scope>
</reference>
<reference key="7">
    <citation type="journal article" date="2001" name="Dev. Cell">
        <title>The transcription factors L-Sox5 and Sox6 are essential for cartilage formation.</title>
        <authorList>
            <person name="Smits P."/>
            <person name="Li P."/>
            <person name="Mandel J."/>
            <person name="Zhang Z."/>
            <person name="Deng J.M."/>
            <person name="Behringer R.R."/>
            <person name="de Crombrugghe B."/>
            <person name="Lefebvre V."/>
        </authorList>
    </citation>
    <scope>FUNCTION</scope>
    <scope>TISSUE SPECIFICITY</scope>
</reference>
<reference key="8">
    <citation type="journal article" date="2002" name="Genes Dev.">
        <title>The transcription factor Sox9 has essential roles in successive steps of the chondrocyte differentiation pathway and is required for expression of Sox5 and Sox6.</title>
        <authorList>
            <person name="Akiyama H."/>
            <person name="Chaboissier M.C."/>
            <person name="Martin J.F."/>
            <person name="Schedl A."/>
            <person name="de Crombrugghe B."/>
        </authorList>
    </citation>
    <scope>INDUCTION</scope>
</reference>
<reference key="9">
    <citation type="journal article" date="2003" name="Nucleic Acids Res.">
        <title>Sox6 regulation of cardiac myocyte development.</title>
        <authorList>
            <person name="Cohen-Barak O."/>
            <person name="Yi Z."/>
            <person name="Hagiwara N."/>
            <person name="Monzen K."/>
            <person name="Komuro I."/>
            <person name="Brilliant M.H."/>
        </authorList>
    </citation>
    <scope>INTERACTION WITH DAZAP2</scope>
</reference>
<reference key="10">
    <citation type="journal article" date="2004" name="Arthritis Rheum.">
        <title>The combination of SOX5, SOX6, and SOX9 (the SOX trio) provides signals sufficient for induction of permanent cartilage.</title>
        <authorList>
            <person name="Ikeda T."/>
            <person name="Kamekura S."/>
            <person name="Mabuchi A."/>
            <person name="Kou I."/>
            <person name="Seki S."/>
            <person name="Takato T."/>
            <person name="Nakamura K."/>
            <person name="Kawaguchi H."/>
            <person name="Ikegawa S."/>
            <person name="Chung U.I."/>
        </authorList>
    </citation>
    <scope>FUNCTION</scope>
</reference>
<reference key="11">
    <citation type="journal article" date="2004" name="J. Cell Biol.">
        <title>Sox5 and Sox6 are needed to develop and maintain source, columnar, and hypertrophic chondrocytes in the cartilage growth plate.</title>
        <authorList>
            <person name="Smits P."/>
            <person name="Dy P."/>
            <person name="Mitra S."/>
            <person name="Lefebvre V."/>
        </authorList>
    </citation>
    <scope>FUNCTION</scope>
    <scope>DISRUPTION PHENOTYPE</scope>
</reference>
<reference key="12">
    <citation type="journal article" date="2007" name="Proc. Natl. Acad. Sci. U.S.A.">
        <title>Large-scale phosphorylation analysis of mouse liver.</title>
        <authorList>
            <person name="Villen J."/>
            <person name="Beausoleil S.A."/>
            <person name="Gerber S.A."/>
            <person name="Gygi S.P."/>
        </authorList>
    </citation>
    <scope>IDENTIFICATION BY MASS SPECTROMETRY [LARGE SCALE ANALYSIS]</scope>
    <source>
        <tissue>Liver</tissue>
    </source>
</reference>
<reference key="13">
    <citation type="journal article" date="2010" name="Cell">
        <title>A tissue-specific atlas of mouse protein phosphorylation and expression.</title>
        <authorList>
            <person name="Huttlin E.L."/>
            <person name="Jedrychowski M.P."/>
            <person name="Elias J.E."/>
            <person name="Goswami T."/>
            <person name="Rad R."/>
            <person name="Beausoleil S.A."/>
            <person name="Villen J."/>
            <person name="Haas W."/>
            <person name="Sowa M.E."/>
            <person name="Gygi S.P."/>
        </authorList>
    </citation>
    <scope>PHOSPHORYLATION [LARGE SCALE ANALYSIS] AT THR-119; SER-399; THR-401; SER-439 AND SER-442</scope>
    <scope>IDENTIFICATION BY MASS SPECTROMETRY [LARGE SCALE ANALYSIS]</scope>
    <source>
        <tissue>Kidney</tissue>
        <tissue>Spleen</tissue>
    </source>
</reference>
<reference key="14">
    <citation type="journal article" date="2015" name="Nucleic Acids Res.">
        <title>The transcription factors SOX9 and SOX5/SOX6 cooperate genome-wide through super-enhancers to drive chondrogenesis.</title>
        <authorList>
            <person name="Liu C.F."/>
            <person name="Lefebvre V."/>
        </authorList>
    </citation>
    <scope>FUNCTION</scope>
    <scope>DNA-BINDING</scope>
</reference>
<reference key="15">
    <citation type="journal article" date="2016" name="J. Neurochem.">
        <title>Sox13 functionally complements the related Sox5 and Sox6 as important developmental modulators in mouse spinal cord oligodendrocytes.</title>
        <authorList>
            <person name="Baroti T."/>
            <person name="Schillinger A."/>
            <person name="Wegner M."/>
            <person name="Stolt C.C."/>
        </authorList>
    </citation>
    <scope>FUNCTION</scope>
    <scope>DISRUPTION PHENOTYPE</scope>
</reference>
<reference key="16">
    <citation type="journal article" date="2016" name="PLoS Genet.">
        <title>Comparative Transcriptomic and Epigenomic Analyses Reveal New Regulators of Murine Brown Adipogenesis.</title>
        <authorList>
            <person name="Brunmeir R."/>
            <person name="Wu J."/>
            <person name="Peng X."/>
            <person name="Kim S.Y."/>
            <person name="Julien S.G."/>
            <person name="Zhang Q."/>
            <person name="Xie W."/>
            <person name="Xu F."/>
        </authorList>
    </citation>
    <scope>DEVELOPMENTAL STAGE</scope>
</reference>
<reference key="17">
    <citation type="journal article" date="2020" name="Am. J. Hum. Genet.">
        <title>De Novo SOX6 Variants Cause a Neurodevelopmental Syndrome Associated with ADHD, Craniosynostosis, and Osteochondromas.</title>
        <authorList>
            <consortium name="Genomics England Research Consortium"/>
            <person name="Tolchin D."/>
            <person name="Yeager J.P."/>
            <person name="Prasad P."/>
            <person name="Dorrani N."/>
            <person name="Russi A.S."/>
            <person name="Martinez-Agosto J.A."/>
            <person name="Haseeb A."/>
            <person name="Angelozzi M."/>
            <person name="Santen G.W.E."/>
            <person name="Ruivenkamp C."/>
            <person name="Mercimek-Andrews S."/>
            <person name="Depienne C."/>
            <person name="Kuechler A."/>
            <person name="Mikat B."/>
            <person name="Ludecke H.J."/>
            <person name="Bilan F."/>
            <person name="Le Guyader G."/>
            <person name="Gilbert-Dussardier B."/>
            <person name="Keren B."/>
            <person name="Heide S."/>
            <person name="Haye D."/>
            <person name="Van Esch H."/>
            <person name="Keldermans L."/>
            <person name="Ortiz D."/>
            <person name="Lancaster E."/>
            <person name="Krantz I.D."/>
            <person name="Krock B.L."/>
            <person name="Pechter K.B."/>
            <person name="Arkader A."/>
            <person name="Medne L."/>
            <person name="DeChene E.T."/>
            <person name="Calpena E."/>
            <person name="Melistaccio G."/>
            <person name="Wilkie A.O.M."/>
            <person name="Suri M."/>
            <person name="Foulds N."/>
            <person name="Begtrup A."/>
            <person name="Henderson L.B."/>
            <person name="Forster C."/>
            <person name="Reed P."/>
            <person name="McDonald M.T."/>
            <person name="McConkie-Rosell A."/>
            <person name="Thevenon J."/>
            <person name="Le Tanno P."/>
            <person name="Coutton C."/>
            <person name="Tsai A.C.H."/>
            <person name="Stewart S."/>
            <person name="Maver A."/>
            <person name="Gorazd R."/>
            <person name="Pichon O."/>
            <person name="Nizon M."/>
            <person name="Cogne B."/>
            <person name="Isidor B."/>
            <person name="Martin-Coignard D."/>
            <person name="Stoeva R."/>
            <person name="Lefebvre V."/>
            <person name="Le Caignec C."/>
        </authorList>
    </citation>
    <scope>FUNCTION</scope>
    <scope>SUBUNIT</scope>
    <scope>SUBCELLULAR LOCATION</scope>
    <scope>MUTAGENESIS OF TRP-161; MET-624; TRP-658 AND SER-765</scope>
</reference>
<organism>
    <name type="scientific">Mus musculus</name>
    <name type="common">Mouse</name>
    <dbReference type="NCBI Taxonomy" id="10090"/>
    <lineage>
        <taxon>Eukaryota</taxon>
        <taxon>Metazoa</taxon>
        <taxon>Chordata</taxon>
        <taxon>Craniata</taxon>
        <taxon>Vertebrata</taxon>
        <taxon>Euteleostomi</taxon>
        <taxon>Mammalia</taxon>
        <taxon>Eutheria</taxon>
        <taxon>Euarchontoglires</taxon>
        <taxon>Glires</taxon>
        <taxon>Rodentia</taxon>
        <taxon>Myomorpha</taxon>
        <taxon>Muroidea</taxon>
        <taxon>Muridae</taxon>
        <taxon>Murinae</taxon>
        <taxon>Mus</taxon>
        <taxon>Mus</taxon>
    </lineage>
</organism>
<comment type="function">
    <text evidence="7 10 11 12 13 15 16 17 22">Transcription factor that plays a key role in several developmental processes, including neurogenesis, chondrocytes differentiation and cartilage formation (Probable). Specifically binds the 5'-AACAAT-3' DNA motif present in enhancers and super-enhancers and promotes expression of genes important for chondrogenesis (PubMed:11702786, PubMed:9755172). Required for overt chondrogenesis when condensed prechondrocytes differentiate into early stage chondrocytes: SOX5 and SOX6 cooperatively bind with SOX9 on active enhancers and super-enhancers associated with cartilage-specific genes, and thereby potentiate SOX9's ability to transactivate (PubMed:11702786, PubMed:15529345, PubMed:26150426). Not involved in precartilaginous condensation, the first step in chondrogenesis, during which skeletal progenitors differentiate into prechondrocytes (PubMed:14993235, PubMed:26150426). Together with SOX5, required to form and maintain a pool of highly proliferating chondroblasts between epiphyses and metaphyses, to form columnar chondroblasts, delay chondrocyte prehypertrophy but promote hypertrophy, and to delay terminal differentiation of chondrocytes on contact with ossification fronts (PubMed:14993235). Binds to the proximal promoter region of the myelin protein MPZ gene, and is thereby involved in the differentiation of oligodendroglia in the developing spinal tube (PubMed:26525805). Binds to the gene promoter of MBP and acts as a transcriptional repressor (PubMed:26525805).</text>
</comment>
<comment type="subunit">
    <text evidence="6 9 15">Homodimer (PubMed:32442410). Interacts with DAZAP2 (PubMed:14530442). May interact with CENPK (PubMed:10996314).</text>
</comment>
<comment type="interaction">
    <interactant intactId="EBI-3505685">
        <id>P40645</id>
    </interactant>
    <interactant intactId="EBI-397872">
        <id>Q02248</id>
        <label>Ctnnb1</label>
    </interactant>
    <organismsDiffer>false</organismsDiffer>
    <experiments>2</experiments>
</comment>
<comment type="interaction">
    <interactant intactId="EBI-3505685">
        <id>P40645</id>
    </interactant>
    <interactant intactId="EBI-491549">
        <id>P35222</id>
        <label>CTNNB1</label>
    </interactant>
    <organismsDiffer>true</organismsDiffer>
    <experiments>2</experiments>
</comment>
<comment type="subcellular location">
    <subcellularLocation>
        <location evidence="4 15">Nucleus</location>
    </subcellularLocation>
    <subcellularLocation>
        <location evidence="15">Cytoplasm</location>
    </subcellularLocation>
</comment>
<comment type="alternative products">
    <event type="alternative splicing"/>
    <isoform>
        <id>P40645-1</id>
        <name>1</name>
        <sequence type="displayed"/>
    </isoform>
    <isoform>
        <id>P40645-2</id>
        <name>2</name>
        <sequence type="described" ref="VSP_002198"/>
    </isoform>
    <text>Additional isoforms seem to exist.</text>
</comment>
<comment type="tissue specificity">
    <text>Highly expressed in testis.</text>
</comment>
<comment type="developmental stage">
    <text evidence="14">Expression is transiently increased during brown adipocyte differentiation.</text>
</comment>
<comment type="induction">
    <text evidence="8">Expression is dependent on SOX9.</text>
</comment>
<comment type="PTM">
    <text evidence="2">Sumoylation inhibits the transcriptional activity.</text>
</comment>
<comment type="disruption phenotype">
    <text evidence="7 10 13">Newborn mice display mild skeletal abnormalities (PubMed:11702786). Knockout mice also display increase in prematurely differentiated oligodendrocyte precursor cells in the motor neuron progenitor domain of the spinal tube at 11.5 dpc (PubMed:26525805). At 18.5 dpc the number and distribution of oligodendroglia are normal, however there is an increased number of differentiating oligodendrocytes (PubMed:26525805). Double knockout of Sox13 and Sox6 show an increase in oligodendrocyte precursor cells in the spinal tube at 11.5 dpc, at 18.5 dpc the number and distribution of oligodendroglia are normal but contain an increased number of differentiating cells (PubMed:26525805). Mice lacking both Sox5 and Sox6 develop a severe chondrodysplasia characterized by the virtual absence of cartilage: chondrogenic cells are largely arrested at the stage of chondrogenic mesenchymal condensations (PubMed:11702786). Embryos lacking Sox5 (homozygous knockout) and heterozygous for Sox6 live until birth and show severe growth plate chondrocyte defects (PubMed:14993235). Embryos lacking Sox6 (homozygous knockout) and heterozygous for Sox5 live until birth and show severe growth plate chondrocyte defects (PubMed:14993235).</text>
</comment>
<sequence length="827" mass="91803">MSSKQATSPFACTADGEEAMTQDLTSREKEEGSDQHPASHLPLHPIMHNKPHSEELPTLVSTIQQDADWDSVLSSQQRMESENNKLCSLYSFRNTSTSPHKPDEGSREREIMNSVTFGTPERRKGSLADVVDTLKQKKLEEMTRTEQEDSSCMEKLLSKDWKEKMERLNTSELLGEIKGTPESLAEKERQLSTMITQLISLREQLLAAHDEQKKLAASQIEKQRQQMDLARQQQEQIARQQQQLLQQQHKINLLQQQIQVQGHMPPLMIPIFPHDQRTLAAAAAAQQGFLFPPGITYKPGDNYPVQFIPSTMAAAAASGLSPLQLQKGHVSHPQINPRLKGISDRFGRNLDPSEHGGGHSYNHRQIEQLYAAQLASMQVSPGAKMPSTPQPPNSAGAVSPTGIKNEKRGTSPVTQVKDETTAQPLNLSSRPKTAEPVKSPTSPTQNLFPASKTSPVNLPNKSSIPSPIGGSLGRGSSLDILSSLNSPALFGDQDTVMKAIQEARKMREQIQREQQQQPHGVDGKLSSMNNMGLSNCRTEKERTRFENLGPQLTGKSSEDGKLGPGVIDLTRPEDAEGSKAMNGSAAKLQQYYCWPTGGATVAEARVYRDARGRASSEPHIKRPMNAFMVWAKDERRKILQAFPDMHNSNISKILGSRWKSMSNQEKQPYYEEQARLSKIHLEKYPNYKYKPRPKRTCIVDGKKLRIGEYKQLMRSRRQEMRQFFTVGQQPQMPITTGTGVVYPGAITMATTTPSPQMTSDCSSTSASPEPSLPVIQSTYGMKMDGASLAGNDMINGEDEMEAYDDYEDDPKSDYSSENEAPEPVSAN</sequence>
<feature type="chain" id="PRO_0000048730" description="Transcription factor SOX-6">
    <location>
        <begin position="1"/>
        <end position="827"/>
    </location>
</feature>
<feature type="DNA-binding region" description="HMG box" evidence="4">
    <location>
        <begin position="620"/>
        <end position="688"/>
    </location>
</feature>
<feature type="region of interest" description="Disordered" evidence="5">
    <location>
        <begin position="1"/>
        <end position="51"/>
    </location>
</feature>
<feature type="region of interest" description="Disordered" evidence="5">
    <location>
        <begin position="334"/>
        <end position="361"/>
    </location>
</feature>
<feature type="region of interest" description="Disordered" evidence="5">
    <location>
        <begin position="379"/>
        <end position="470"/>
    </location>
</feature>
<feature type="region of interest" description="Disordered" evidence="5">
    <location>
        <begin position="752"/>
        <end position="772"/>
    </location>
</feature>
<feature type="region of interest" description="Disordered" evidence="5">
    <location>
        <begin position="786"/>
        <end position="827"/>
    </location>
</feature>
<feature type="coiled-coil region" evidence="3">
    <location>
        <begin position="184"/>
        <end position="262"/>
    </location>
</feature>
<feature type="compositionally biased region" description="Polar residues" evidence="5">
    <location>
        <begin position="1"/>
        <end position="10"/>
    </location>
</feature>
<feature type="compositionally biased region" description="Basic and acidic residues" evidence="5">
    <location>
        <begin position="25"/>
        <end position="34"/>
    </location>
</feature>
<feature type="compositionally biased region" description="Basic and acidic residues" evidence="5">
    <location>
        <begin position="341"/>
        <end position="357"/>
    </location>
</feature>
<feature type="compositionally biased region" description="Polar residues" evidence="5">
    <location>
        <begin position="421"/>
        <end position="431"/>
    </location>
</feature>
<feature type="compositionally biased region" description="Polar residues" evidence="5">
    <location>
        <begin position="439"/>
        <end position="461"/>
    </location>
</feature>
<feature type="compositionally biased region" description="Acidic residues" evidence="5">
    <location>
        <begin position="795"/>
        <end position="808"/>
    </location>
</feature>
<feature type="modified residue" description="Phosphothreonine" evidence="24">
    <location>
        <position position="119"/>
    </location>
</feature>
<feature type="modified residue" description="Phosphoserine" evidence="24">
    <location>
        <position position="399"/>
    </location>
</feature>
<feature type="modified residue" description="Phosphothreonine" evidence="24">
    <location>
        <position position="401"/>
    </location>
</feature>
<feature type="modified residue" description="Phosphoserine" evidence="24">
    <location>
        <position position="439"/>
    </location>
</feature>
<feature type="modified residue" description="Phosphoserine" evidence="24">
    <location>
        <position position="442"/>
    </location>
</feature>
<feature type="cross-link" description="Glycyl lysine isopeptide (Lys-Gly) (interchain with G-Cter in SUMO)" evidence="1">
    <location>
        <position position="404"/>
    </location>
</feature>
<feature type="cross-link" description="Glycyl lysine isopeptide (Lys-Gly) (interchain with G-Cter in SUMO)" evidence="1">
    <location>
        <position position="417"/>
    </location>
</feature>
<feature type="splice variant" id="VSP_002198" description="In isoform 2." evidence="20">
    <location>
        <begin position="327"/>
        <end position="367"/>
    </location>
</feature>
<feature type="mutagenesis site" description="Decreased localization to the nucleus. No effect on homodimerization. No effect on transcription cis-regulatory region binding. No effect on DNA-binding transcription factor activity." evidence="15">
    <original>W</original>
    <variation>C</variation>
    <location>
        <position position="161"/>
    </location>
</feature>
<feature type="mutagenesis site" description="Decreased localization to the nucleus. No effect on homodimerization. Decreased transcription cis-regulatory region binding. Loss of DNA-binding transcription factor activity. Acts as a dominant negative." evidence="15">
    <original>M</original>
    <variation>T</variation>
    <location>
        <position position="624"/>
    </location>
</feature>
<feature type="mutagenesis site" description="Loss of localization to the nucleus. Loss of transcription cis-regulatory region binding. Loss of DNA-binding transcription factor activity. Acts as a dominant negative." evidence="15">
    <original>W</original>
    <variation>R</variation>
    <location>
        <position position="658"/>
    </location>
</feature>
<feature type="mutagenesis site" description="Increased localization to the nucleus. Decreased transcription cis-regulatory region binding. No effect on DNA-binding transcription factor activity." evidence="15">
    <original>S</original>
    <variation>L</variation>
    <location>
        <position position="765"/>
    </location>
</feature>
<feature type="sequence conflict" description="In Ref. 2; BAA09618." evidence="21" ref="2">
    <original>MA</original>
    <variation>SS</variation>
    <location>
        <begin position="312"/>
        <end position="313"/>
    </location>
</feature>
<feature type="sequence conflict" description="In Ref. 4; CAA46610." evidence="21" ref="4">
    <original>K</original>
    <variation>R</variation>
    <location>
        <position position="632"/>
    </location>
</feature>
<protein>
    <recommendedName>
        <fullName evidence="21">Transcription factor SOX-6</fullName>
    </recommendedName>
    <alternativeName>
        <fullName evidence="18">SOX-LZ</fullName>
    </alternativeName>
</protein>
<accession>P40645</accession>
<accession>Q62250</accession>
<accession>Q9QWS5</accession>
<dbReference type="EMBL" id="U32614">
    <property type="protein sequence ID" value="AAC52263.1"/>
    <property type="molecule type" value="mRNA"/>
</dbReference>
<dbReference type="EMBL" id="D61689">
    <property type="protein sequence ID" value="BAA09618.1"/>
    <property type="molecule type" value="mRNA"/>
</dbReference>
<dbReference type="EMBL" id="AJ010605">
    <property type="protein sequence ID" value="CAA09270.1"/>
    <property type="molecule type" value="mRNA"/>
</dbReference>
<dbReference type="EMBL" id="X65659">
    <property type="protein sequence ID" value="CAA46610.1"/>
    <property type="molecule type" value="mRNA"/>
</dbReference>
<dbReference type="CCDS" id="CCDS40098.1">
    <molecule id="P40645-1"/>
</dbReference>
<dbReference type="PIR" id="S22944">
    <property type="entry name" value="S22944"/>
</dbReference>
<dbReference type="PIR" id="S59121">
    <property type="entry name" value="S59121"/>
</dbReference>
<dbReference type="RefSeq" id="NP_001264255.1">
    <molecule id="P40645-1"/>
    <property type="nucleotide sequence ID" value="NM_001277326.2"/>
</dbReference>
<dbReference type="RefSeq" id="NP_001264257.1">
    <molecule id="P40645-2"/>
    <property type="nucleotide sequence ID" value="NM_001277328.2"/>
</dbReference>
<dbReference type="RefSeq" id="NP_001404227.1">
    <molecule id="P40645-2"/>
    <property type="nucleotide sequence ID" value="NM_001417298.1"/>
</dbReference>
<dbReference type="RefSeq" id="NP_001404228.1">
    <molecule id="P40645-2"/>
    <property type="nucleotide sequence ID" value="NM_001417299.1"/>
</dbReference>
<dbReference type="RefSeq" id="NP_001404229.1">
    <molecule id="P40645-2"/>
    <property type="nucleotide sequence ID" value="NM_001417300.1"/>
</dbReference>
<dbReference type="RefSeq" id="NP_035575.1">
    <molecule id="P40645-1"/>
    <property type="nucleotide sequence ID" value="NM_011445.5"/>
</dbReference>
<dbReference type="RefSeq" id="XP_011240009.1">
    <molecule id="P40645-1"/>
    <property type="nucleotide sequence ID" value="XM_011241707.4"/>
</dbReference>
<dbReference type="RefSeq" id="XP_011240013.1">
    <property type="nucleotide sequence ID" value="XM_011241711.2"/>
</dbReference>
<dbReference type="RefSeq" id="XP_030098145.1">
    <molecule id="P40645-1"/>
    <property type="nucleotide sequence ID" value="XM_030242285.2"/>
</dbReference>
<dbReference type="RefSeq" id="XP_030098146.1">
    <molecule id="P40645-1"/>
    <property type="nucleotide sequence ID" value="XM_030242286.2"/>
</dbReference>
<dbReference type="RefSeq" id="XP_030098156.1">
    <molecule id="P40645-2"/>
    <property type="nucleotide sequence ID" value="XM_030242296.2"/>
</dbReference>
<dbReference type="RefSeq" id="XP_030098157.1">
    <molecule id="P40645-2"/>
    <property type="nucleotide sequence ID" value="XM_030242297.2"/>
</dbReference>
<dbReference type="RefSeq" id="XP_030098160.1">
    <molecule id="P40645-2"/>
    <property type="nucleotide sequence ID" value="XM_030242300.2"/>
</dbReference>
<dbReference type="RefSeq" id="XP_036008727.1">
    <molecule id="P40645-1"/>
    <property type="nucleotide sequence ID" value="XM_036152834.1"/>
</dbReference>
<dbReference type="RefSeq" id="XP_036008728.1">
    <molecule id="P40645-1"/>
    <property type="nucleotide sequence ID" value="XM_036152835.1"/>
</dbReference>
<dbReference type="RefSeq" id="XP_036008729.1">
    <molecule id="P40645-1"/>
    <property type="nucleotide sequence ID" value="XM_036152836.1"/>
</dbReference>
<dbReference type="RefSeq" id="XP_036008730.1">
    <molecule id="P40645-1"/>
    <property type="nucleotide sequence ID" value="XM_036152837.1"/>
</dbReference>
<dbReference type="SMR" id="P40645"/>
<dbReference type="BioGRID" id="203410">
    <property type="interactions" value="6"/>
</dbReference>
<dbReference type="FunCoup" id="P40645">
    <property type="interactions" value="1613"/>
</dbReference>
<dbReference type="IntAct" id="P40645">
    <property type="interactions" value="5"/>
</dbReference>
<dbReference type="MINT" id="P40645"/>
<dbReference type="STRING" id="10090.ENSMUSP00000072583"/>
<dbReference type="iPTMnet" id="P40645"/>
<dbReference type="PhosphoSitePlus" id="P40645"/>
<dbReference type="jPOST" id="P40645"/>
<dbReference type="PaxDb" id="10090-ENSMUSP00000072583"/>
<dbReference type="ProteomicsDB" id="261117">
    <molecule id="P40645-1"/>
</dbReference>
<dbReference type="ProteomicsDB" id="261118">
    <molecule id="P40645-2"/>
</dbReference>
<dbReference type="Antibodypedia" id="1097">
    <property type="antibodies" value="290 antibodies from 33 providers"/>
</dbReference>
<dbReference type="DNASU" id="20679"/>
<dbReference type="Ensembl" id="ENSMUST00000072804.11">
    <molecule id="P40645-1"/>
    <property type="protein sequence ID" value="ENSMUSP00000072583.5"/>
    <property type="gene ID" value="ENSMUSG00000051910.14"/>
</dbReference>
<dbReference type="Ensembl" id="ENSMUST00000166207.3">
    <molecule id="P40645-1"/>
    <property type="protein sequence ID" value="ENSMUSP00000129027.2"/>
    <property type="gene ID" value="ENSMUSG00000051910.14"/>
</dbReference>
<dbReference type="GeneID" id="20679"/>
<dbReference type="KEGG" id="mmu:20679"/>
<dbReference type="UCSC" id="uc009jin.2">
    <molecule id="P40645-2"/>
    <property type="organism name" value="mouse"/>
</dbReference>
<dbReference type="UCSC" id="uc009jip.2">
    <molecule id="P40645-1"/>
    <property type="organism name" value="mouse"/>
</dbReference>
<dbReference type="AGR" id="MGI:98368"/>
<dbReference type="CTD" id="55553"/>
<dbReference type="MGI" id="MGI:98368">
    <property type="gene designation" value="Sox6"/>
</dbReference>
<dbReference type="VEuPathDB" id="HostDB:ENSMUSG00000051910"/>
<dbReference type="eggNOG" id="KOG0528">
    <property type="taxonomic scope" value="Eukaryota"/>
</dbReference>
<dbReference type="GeneTree" id="ENSGT00940000156433"/>
<dbReference type="InParanoid" id="P40645"/>
<dbReference type="OMA" id="XESENNK"/>
<dbReference type="OrthoDB" id="6247875at2759"/>
<dbReference type="PhylomeDB" id="P40645"/>
<dbReference type="TreeFam" id="TF320471"/>
<dbReference type="Reactome" id="R-MMU-3769402">
    <property type="pathway name" value="Deactivation of the beta-catenin transactivating complex"/>
</dbReference>
<dbReference type="BioGRID-ORCS" id="20679">
    <property type="hits" value="1 hit in 77 CRISPR screens"/>
</dbReference>
<dbReference type="ChiTaRS" id="Sox6">
    <property type="organism name" value="mouse"/>
</dbReference>
<dbReference type="PRO" id="PR:P40645"/>
<dbReference type="Proteomes" id="UP000000589">
    <property type="component" value="Chromosome 7"/>
</dbReference>
<dbReference type="RNAct" id="P40645">
    <property type="molecule type" value="protein"/>
</dbReference>
<dbReference type="Bgee" id="ENSMUSG00000051910">
    <property type="expression patterns" value="Expressed in triceps brachii and 240 other cell types or tissues"/>
</dbReference>
<dbReference type="ExpressionAtlas" id="P40645">
    <property type="expression patterns" value="baseline and differential"/>
</dbReference>
<dbReference type="GO" id="GO:0005737">
    <property type="term" value="C:cytoplasm"/>
    <property type="evidence" value="ECO:0007669"/>
    <property type="project" value="UniProtKB-SubCell"/>
</dbReference>
<dbReference type="GO" id="GO:0005634">
    <property type="term" value="C:nucleus"/>
    <property type="evidence" value="ECO:0000314"/>
    <property type="project" value="MGI"/>
</dbReference>
<dbReference type="GO" id="GO:0005667">
    <property type="term" value="C:transcription regulator complex"/>
    <property type="evidence" value="ECO:0000305"/>
    <property type="project" value="MGI"/>
</dbReference>
<dbReference type="GO" id="GO:0003677">
    <property type="term" value="F:DNA binding"/>
    <property type="evidence" value="ECO:0000314"/>
    <property type="project" value="UniProtKB"/>
</dbReference>
<dbReference type="GO" id="GO:0003700">
    <property type="term" value="F:DNA-binding transcription factor activity"/>
    <property type="evidence" value="ECO:0000314"/>
    <property type="project" value="MGI"/>
</dbReference>
<dbReference type="GO" id="GO:0001217">
    <property type="term" value="F:DNA-binding transcription repressor activity"/>
    <property type="evidence" value="ECO:0000314"/>
    <property type="project" value="UniProtKB"/>
</dbReference>
<dbReference type="GO" id="GO:0001227">
    <property type="term" value="F:DNA-binding transcription repressor activity, RNA polymerase II-specific"/>
    <property type="evidence" value="ECO:0000315"/>
    <property type="project" value="NTNU_SB"/>
</dbReference>
<dbReference type="GO" id="GO:0042803">
    <property type="term" value="F:protein homodimerization activity"/>
    <property type="evidence" value="ECO:0000250"/>
    <property type="project" value="UniProtKB"/>
</dbReference>
<dbReference type="GO" id="GO:0000978">
    <property type="term" value="F:RNA polymerase II cis-regulatory region sequence-specific DNA binding"/>
    <property type="evidence" value="ECO:0000314"/>
    <property type="project" value="MGI"/>
</dbReference>
<dbReference type="GO" id="GO:0043565">
    <property type="term" value="F:sequence-specific DNA binding"/>
    <property type="evidence" value="ECO:0000314"/>
    <property type="project" value="MGI"/>
</dbReference>
<dbReference type="GO" id="GO:0000976">
    <property type="term" value="F:transcription cis-regulatory region binding"/>
    <property type="evidence" value="ECO:0000314"/>
    <property type="project" value="MGI"/>
</dbReference>
<dbReference type="GO" id="GO:0007420">
    <property type="term" value="P:brain development"/>
    <property type="evidence" value="ECO:0000250"/>
    <property type="project" value="UniProtKB"/>
</dbReference>
<dbReference type="GO" id="GO:0055007">
    <property type="term" value="P:cardiac muscle cell differentiation"/>
    <property type="evidence" value="ECO:0000314"/>
    <property type="project" value="MGI"/>
</dbReference>
<dbReference type="GO" id="GO:0001502">
    <property type="term" value="P:cartilage condensation"/>
    <property type="evidence" value="ECO:0000315"/>
    <property type="project" value="UniProtKB"/>
</dbReference>
<dbReference type="GO" id="GO:0051216">
    <property type="term" value="P:cartilage development"/>
    <property type="evidence" value="ECO:0000314"/>
    <property type="project" value="UniProtKB"/>
</dbReference>
<dbReference type="GO" id="GO:0045165">
    <property type="term" value="P:cell fate commitment"/>
    <property type="evidence" value="ECO:0000316"/>
    <property type="project" value="MGI"/>
</dbReference>
<dbReference type="GO" id="GO:0000902">
    <property type="term" value="P:cell morphogenesis"/>
    <property type="evidence" value="ECO:0000315"/>
    <property type="project" value="MGI"/>
</dbReference>
<dbReference type="GO" id="GO:0002062">
    <property type="term" value="P:chondrocyte differentiation"/>
    <property type="evidence" value="ECO:0000315"/>
    <property type="project" value="UniProtKB"/>
</dbReference>
<dbReference type="GO" id="GO:0048821">
    <property type="term" value="P:erythrocyte development"/>
    <property type="evidence" value="ECO:0000315"/>
    <property type="project" value="MGI"/>
</dbReference>
<dbReference type="GO" id="GO:0030218">
    <property type="term" value="P:erythrocyte differentiation"/>
    <property type="evidence" value="ECO:0000315"/>
    <property type="project" value="MGI"/>
</dbReference>
<dbReference type="GO" id="GO:0010467">
    <property type="term" value="P:gene expression"/>
    <property type="evidence" value="ECO:0000315"/>
    <property type="project" value="MGI"/>
</dbReference>
<dbReference type="GO" id="GO:0030097">
    <property type="term" value="P:hemopoiesis"/>
    <property type="evidence" value="ECO:0000315"/>
    <property type="project" value="MGI"/>
</dbReference>
<dbReference type="GO" id="GO:0001701">
    <property type="term" value="P:in utero embryonic development"/>
    <property type="evidence" value="ECO:0000315"/>
    <property type="project" value="MGI"/>
</dbReference>
<dbReference type="GO" id="GO:0045892">
    <property type="term" value="P:negative regulation of DNA-templated transcription"/>
    <property type="evidence" value="ECO:0000314"/>
    <property type="project" value="MGI"/>
</dbReference>
<dbReference type="GO" id="GO:0000122">
    <property type="term" value="P:negative regulation of transcription by RNA polymerase II"/>
    <property type="evidence" value="ECO:0000314"/>
    <property type="project" value="MGI"/>
</dbReference>
<dbReference type="GO" id="GO:0021778">
    <property type="term" value="P:oligodendrocyte cell fate specification"/>
    <property type="evidence" value="ECO:0000315"/>
    <property type="project" value="MGI"/>
</dbReference>
<dbReference type="GO" id="GO:0048709">
    <property type="term" value="P:oligodendrocyte differentiation"/>
    <property type="evidence" value="ECO:0000315"/>
    <property type="project" value="MGI"/>
</dbReference>
<dbReference type="GO" id="GO:0032332">
    <property type="term" value="P:positive regulation of chondrocyte differentiation"/>
    <property type="evidence" value="ECO:0000314"/>
    <property type="project" value="UniProtKB"/>
</dbReference>
<dbReference type="GO" id="GO:0045893">
    <property type="term" value="P:positive regulation of DNA-templated transcription"/>
    <property type="evidence" value="ECO:0000314"/>
    <property type="project" value="MGI"/>
</dbReference>
<dbReference type="GO" id="GO:0045944">
    <property type="term" value="P:positive regulation of transcription by RNA polymerase II"/>
    <property type="evidence" value="ECO:0000316"/>
    <property type="project" value="MGI"/>
</dbReference>
<dbReference type="GO" id="GO:0009791">
    <property type="term" value="P:post-embryonic development"/>
    <property type="evidence" value="ECO:0000315"/>
    <property type="project" value="MGI"/>
</dbReference>
<dbReference type="GO" id="GO:0006355">
    <property type="term" value="P:regulation of DNA-templated transcription"/>
    <property type="evidence" value="ECO:0000314"/>
    <property type="project" value="MGI"/>
</dbReference>
<dbReference type="GO" id="GO:0010468">
    <property type="term" value="P:regulation of gene expression"/>
    <property type="evidence" value="ECO:0000315"/>
    <property type="project" value="MGI"/>
</dbReference>
<dbReference type="GO" id="GO:0021529">
    <property type="term" value="P:spinal cord oligodendrocyte cell differentiation"/>
    <property type="evidence" value="ECO:0000315"/>
    <property type="project" value="UniProtKB"/>
</dbReference>
<dbReference type="CDD" id="cd22042">
    <property type="entry name" value="HMG-box_EGL13-like"/>
    <property type="match status" value="1"/>
</dbReference>
<dbReference type="FunFam" id="1.10.30.10:FF:000003">
    <property type="entry name" value="Putative transcription factor SOX-6"/>
    <property type="match status" value="1"/>
</dbReference>
<dbReference type="Gene3D" id="1.10.30.10">
    <property type="entry name" value="High mobility group box domain"/>
    <property type="match status" value="1"/>
</dbReference>
<dbReference type="InterPro" id="IPR009071">
    <property type="entry name" value="HMG_box_dom"/>
</dbReference>
<dbReference type="InterPro" id="IPR036910">
    <property type="entry name" value="HMG_box_dom_sf"/>
</dbReference>
<dbReference type="InterPro" id="IPR051356">
    <property type="entry name" value="SOX/SOX-like_TF"/>
</dbReference>
<dbReference type="PANTHER" id="PTHR45789">
    <property type="entry name" value="FI18025P1"/>
    <property type="match status" value="1"/>
</dbReference>
<dbReference type="PANTHER" id="PTHR45789:SF1">
    <property type="entry name" value="TRANSCRIPTION FACTOR SOX-6"/>
    <property type="match status" value="1"/>
</dbReference>
<dbReference type="Pfam" id="PF00505">
    <property type="entry name" value="HMG_box"/>
    <property type="match status" value="1"/>
</dbReference>
<dbReference type="SMART" id="SM00398">
    <property type="entry name" value="HMG"/>
    <property type="match status" value="1"/>
</dbReference>
<dbReference type="SUPFAM" id="SSF47095">
    <property type="entry name" value="HMG-box"/>
    <property type="match status" value="1"/>
</dbReference>
<dbReference type="PROSITE" id="PS50118">
    <property type="entry name" value="HMG_BOX_2"/>
    <property type="match status" value="1"/>
</dbReference>
<gene>
    <name evidence="19 23" type="primary">Sox6</name>
    <name type="synonym">Sox-6</name>
</gene>
<evidence type="ECO:0000250" key="1"/>
<evidence type="ECO:0000250" key="2">
    <source>
        <dbReference type="UniProtKB" id="P35712"/>
    </source>
</evidence>
<evidence type="ECO:0000255" key="3"/>
<evidence type="ECO:0000255" key="4">
    <source>
        <dbReference type="PROSITE-ProRule" id="PRU00267"/>
    </source>
</evidence>
<evidence type="ECO:0000256" key="5">
    <source>
        <dbReference type="SAM" id="MobiDB-lite"/>
    </source>
</evidence>
<evidence type="ECO:0000269" key="6">
    <source>
    </source>
</evidence>
<evidence type="ECO:0000269" key="7">
    <source>
    </source>
</evidence>
<evidence type="ECO:0000269" key="8">
    <source>
    </source>
</evidence>
<evidence type="ECO:0000269" key="9">
    <source>
    </source>
</evidence>
<evidence type="ECO:0000269" key="10">
    <source>
    </source>
</evidence>
<evidence type="ECO:0000269" key="11">
    <source>
    </source>
</evidence>
<evidence type="ECO:0000269" key="12">
    <source>
    </source>
</evidence>
<evidence type="ECO:0000269" key="13">
    <source>
    </source>
</evidence>
<evidence type="ECO:0000269" key="14">
    <source>
    </source>
</evidence>
<evidence type="ECO:0000269" key="15">
    <source>
    </source>
</evidence>
<evidence type="ECO:0000269" key="16">
    <source>
    </source>
</evidence>
<evidence type="ECO:0000269" key="17">
    <source>
    </source>
</evidence>
<evidence type="ECO:0000303" key="18">
    <source>
    </source>
</evidence>
<evidence type="ECO:0000303" key="19">
    <source>
    </source>
</evidence>
<evidence type="ECO:0000303" key="20">
    <source>
    </source>
</evidence>
<evidence type="ECO:0000305" key="21"/>
<evidence type="ECO:0000305" key="22">
    <source>
    </source>
</evidence>
<evidence type="ECO:0000312" key="23">
    <source>
        <dbReference type="MGI" id="MGI:98368"/>
    </source>
</evidence>
<evidence type="ECO:0007744" key="24">
    <source>
    </source>
</evidence>
<proteinExistence type="evidence at protein level"/>
<name>SOX6_MOUSE</name>
<keyword id="KW-0010">Activator</keyword>
<keyword id="KW-0025">Alternative splicing</keyword>
<keyword id="KW-0175">Coiled coil</keyword>
<keyword id="KW-0963">Cytoplasm</keyword>
<keyword id="KW-0217">Developmental protein</keyword>
<keyword id="KW-0221">Differentiation</keyword>
<keyword id="KW-0903">Direct protein sequencing</keyword>
<keyword id="KW-0238">DNA-binding</keyword>
<keyword id="KW-1017">Isopeptide bond</keyword>
<keyword id="KW-0539">Nucleus</keyword>
<keyword id="KW-0597">Phosphoprotein</keyword>
<keyword id="KW-1185">Reference proteome</keyword>
<keyword id="KW-0678">Repressor</keyword>
<keyword id="KW-0804">Transcription</keyword>
<keyword id="KW-0805">Transcription regulation</keyword>
<keyword id="KW-0832">Ubl conjugation</keyword>